<proteinExistence type="predicted"/>
<reference key="1">
    <citation type="journal article" date="1994" name="J. Bacteriol.">
        <title>Sequencing analysis reveals a unique gene organization in the gyrB region of Mycoplasma hominis.</title>
        <authorList>
            <person name="Ladefoged S.A."/>
            <person name="Christiansen G."/>
        </authorList>
    </citation>
    <scope>NUCLEOTIDE SEQUENCE [GENOMIC DNA]</scope>
</reference>
<reference key="2">
    <citation type="journal article" date="2009" name="PLoS Genet.">
        <title>Life on arginine for Mycoplasma hominis: clues from its minimal genome and comparison with other human urogenital mycoplasmas.</title>
        <authorList>
            <person name="Pereyre S."/>
            <person name="Sirand-Pugnet P."/>
            <person name="Beven L."/>
            <person name="Charron A."/>
            <person name="Renaudin H."/>
            <person name="Barre A."/>
            <person name="Avenaud P."/>
            <person name="Jacob D."/>
            <person name="Couloux A."/>
            <person name="Barbe V."/>
            <person name="de Daruvar A."/>
            <person name="Blanchard A."/>
            <person name="Bebear C."/>
        </authorList>
    </citation>
    <scope>NUCLEOTIDE SEQUENCE [LARGE SCALE GENOMIC DNA]</scope>
    <source>
        <strain>ATCC 23114 / DSM 25592 / NBRC 14850 / NCTC 10111 / PG21</strain>
    </source>
</reference>
<accession>P43055</accession>
<accession>D1J8G6</accession>
<gene>
    <name type="ordered locus">MHO_3780</name>
</gene>
<name>Y3780_METH1</name>
<sequence length="499" mass="59775">MLKRDCCCGCKSAEFCTCKNKKSCIPNNLYEKIRNVFGYEVFEKLNNLRPYFDDLHSSTYIGKLDDVWVQIRIPSDSKINYDNETKLVEKFKDYFYYKDGYIIKKWFPGVDLFKVKIDSGIKKAIFNCVKNFQNLNVDKIEKFDWFKYPIQDAEYKALVKKYSKEPLVLSHNNLKRQNILVNKYGFIKLVDFEYVALNNKYVDPVSLYLFLGIPKEDIIDFFKLDPSVFDDFVFLMRVYNEAMYLNDYSKNNSKSLSPFDSKSLYSNKDFLELNRFIVQKNHNNFDNKLNISKIEKFYFVPLCVYEDEDRTIWKWINSKQLSSFNNHQIKVLAKAMRTLHDSDVEFPEYILSKKINWYLDHMEIKTLLEDLKGNKRINEIIKWIKQIKPDANCHNNLNFNNIFFNSSDNLYIIDWSVAYRNNRYLDIAFLFENTQMTPELESLFWKSYGMICPKDFYKYRIIVHFTAYLYNKLLNTDFNAAKVNTKRINEIFEKLNIKD</sequence>
<dbReference type="EMBL" id="X77529">
    <property type="protein sequence ID" value="CAA54667.1"/>
    <property type="molecule type" value="Genomic_DNA"/>
</dbReference>
<dbReference type="EMBL" id="FP236530">
    <property type="protein sequence ID" value="CAX37513.1"/>
    <property type="molecule type" value="Genomic_DNA"/>
</dbReference>
<dbReference type="RefSeq" id="WP_012855652.1">
    <property type="nucleotide sequence ID" value="NC_013511.1"/>
</dbReference>
<dbReference type="SMR" id="P43055"/>
<dbReference type="STRING" id="347256.MHO_3780"/>
<dbReference type="PaxDb" id="347256-MHO_3780"/>
<dbReference type="KEGG" id="mho:MHO_3780"/>
<dbReference type="eggNOG" id="COG0510">
    <property type="taxonomic scope" value="Bacteria"/>
</dbReference>
<dbReference type="HOGENOM" id="CLU_567202_0_0_14"/>
<dbReference type="Proteomes" id="UP000002631">
    <property type="component" value="Chromosome"/>
</dbReference>
<dbReference type="Gene3D" id="3.90.1200.10">
    <property type="match status" value="2"/>
</dbReference>
<dbReference type="InterPro" id="IPR052077">
    <property type="entry name" value="CcrZ_PhaseVar_Mediator"/>
</dbReference>
<dbReference type="InterPro" id="IPR011009">
    <property type="entry name" value="Kinase-like_dom_sf"/>
</dbReference>
<dbReference type="PANTHER" id="PTHR40086:SF1">
    <property type="entry name" value="CELL CYCLE REGULATOR CCRZ"/>
    <property type="match status" value="1"/>
</dbReference>
<dbReference type="PANTHER" id="PTHR40086">
    <property type="entry name" value="PHOSPHOTRANSFERASE YTMP-RELATED"/>
    <property type="match status" value="1"/>
</dbReference>
<dbReference type="SUPFAM" id="SSF56112">
    <property type="entry name" value="Protein kinase-like (PK-like)"/>
    <property type="match status" value="2"/>
</dbReference>
<feature type="chain" id="PRO_0000066293" description="Uncharacterized protein MHO_3780">
    <location>
        <begin position="1"/>
        <end position="499"/>
    </location>
</feature>
<keyword id="KW-1185">Reference proteome</keyword>
<protein>
    <recommendedName>
        <fullName>Uncharacterized protein MHO_3780</fullName>
    </recommendedName>
    <alternativeName>
        <fullName>ORF499</fullName>
    </alternativeName>
</protein>
<organism>
    <name type="scientific">Metamycoplasma hominis (strain ATCC 23114 / DSM 25592 / NBRC 14850 / NCTC 10111 / PG21)</name>
    <name type="common">Mycoplasma hominis</name>
    <dbReference type="NCBI Taxonomy" id="347256"/>
    <lineage>
        <taxon>Bacteria</taxon>
        <taxon>Bacillati</taxon>
        <taxon>Mycoplasmatota</taxon>
        <taxon>Mycoplasmoidales</taxon>
        <taxon>Metamycoplasmataceae</taxon>
        <taxon>Metamycoplasma</taxon>
    </lineage>
</organism>